<proteinExistence type="inferred from homology"/>
<keyword id="KW-1003">Cell membrane</keyword>
<keyword id="KW-0472">Membrane</keyword>
<keyword id="KW-0812">Transmembrane</keyword>
<keyword id="KW-1133">Transmembrane helix</keyword>
<sequence length="164" mass="18504">MERFLENVMYASRWLLAPVYFGLSLALIALALKFFQEILHVLPNVFALAEADLILVLLSLVDMTLVGGLLVMVMFSGYENFVSQLDISAGKEKLNWLGKMDATSLKNKVAASIVAISSIHLLRVFMDAKNVPDNKLMWYVIIHLTFVLSAFVMGYLDRLTRHNH</sequence>
<comment type="subcellular location">
    <subcellularLocation>
        <location evidence="1">Cell membrane</location>
        <topology evidence="1">Multi-pass membrane protein</topology>
    </subcellularLocation>
</comment>
<comment type="similarity">
    <text evidence="1">Belongs to the UPF0114 family.</text>
</comment>
<dbReference type="EMBL" id="CP000026">
    <property type="protein sequence ID" value="AAV78857.1"/>
    <property type="molecule type" value="Genomic_DNA"/>
</dbReference>
<dbReference type="RefSeq" id="WP_000439335.1">
    <property type="nucleotide sequence ID" value="NC_006511.1"/>
</dbReference>
<dbReference type="KEGG" id="spt:SPA3021"/>
<dbReference type="HOGENOM" id="CLU_097887_1_1_6"/>
<dbReference type="Proteomes" id="UP000008185">
    <property type="component" value="Chromosome"/>
</dbReference>
<dbReference type="GO" id="GO:0005886">
    <property type="term" value="C:plasma membrane"/>
    <property type="evidence" value="ECO:0007669"/>
    <property type="project" value="UniProtKB-SubCell"/>
</dbReference>
<dbReference type="HAMAP" id="MF_00143">
    <property type="entry name" value="UPF0114"/>
    <property type="match status" value="1"/>
</dbReference>
<dbReference type="InterPro" id="IPR005134">
    <property type="entry name" value="UPF0114"/>
</dbReference>
<dbReference type="InterPro" id="IPR020761">
    <property type="entry name" value="UPF0114_bac"/>
</dbReference>
<dbReference type="NCBIfam" id="TIGR00645">
    <property type="entry name" value="HI0507"/>
    <property type="match status" value="1"/>
</dbReference>
<dbReference type="PANTHER" id="PTHR38596">
    <property type="entry name" value="UPF0114 PROTEIN YQHA"/>
    <property type="match status" value="1"/>
</dbReference>
<dbReference type="PANTHER" id="PTHR38596:SF1">
    <property type="entry name" value="UPF0114 PROTEIN YQHA"/>
    <property type="match status" value="1"/>
</dbReference>
<dbReference type="Pfam" id="PF03350">
    <property type="entry name" value="UPF0114"/>
    <property type="match status" value="1"/>
</dbReference>
<accession>Q5PMS0</accession>
<gene>
    <name evidence="1" type="primary">yqhA</name>
    <name type="ordered locus">SPA3021</name>
</gene>
<organism>
    <name type="scientific">Salmonella paratyphi A (strain ATCC 9150 / SARB42)</name>
    <dbReference type="NCBI Taxonomy" id="295319"/>
    <lineage>
        <taxon>Bacteria</taxon>
        <taxon>Pseudomonadati</taxon>
        <taxon>Pseudomonadota</taxon>
        <taxon>Gammaproteobacteria</taxon>
        <taxon>Enterobacterales</taxon>
        <taxon>Enterobacteriaceae</taxon>
        <taxon>Salmonella</taxon>
    </lineage>
</organism>
<evidence type="ECO:0000255" key="1">
    <source>
        <dbReference type="HAMAP-Rule" id="MF_00143"/>
    </source>
</evidence>
<protein>
    <recommendedName>
        <fullName evidence="1">UPF0114 protein YqhA</fullName>
    </recommendedName>
</protein>
<reference key="1">
    <citation type="journal article" date="2004" name="Nat. Genet.">
        <title>Comparison of genome degradation in Paratyphi A and Typhi, human-restricted serovars of Salmonella enterica that cause typhoid.</title>
        <authorList>
            <person name="McClelland M."/>
            <person name="Sanderson K.E."/>
            <person name="Clifton S.W."/>
            <person name="Latreille P."/>
            <person name="Porwollik S."/>
            <person name="Sabo A."/>
            <person name="Meyer R."/>
            <person name="Bieri T."/>
            <person name="Ozersky P."/>
            <person name="McLellan M."/>
            <person name="Harkins C.R."/>
            <person name="Wang C."/>
            <person name="Nguyen C."/>
            <person name="Berghoff A."/>
            <person name="Elliott G."/>
            <person name="Kohlberg S."/>
            <person name="Strong C."/>
            <person name="Du F."/>
            <person name="Carter J."/>
            <person name="Kremizki C."/>
            <person name="Layman D."/>
            <person name="Leonard S."/>
            <person name="Sun H."/>
            <person name="Fulton L."/>
            <person name="Nash W."/>
            <person name="Miner T."/>
            <person name="Minx P."/>
            <person name="Delehaunty K."/>
            <person name="Fronick C."/>
            <person name="Magrini V."/>
            <person name="Nhan M."/>
            <person name="Warren W."/>
            <person name="Florea L."/>
            <person name="Spieth J."/>
            <person name="Wilson R.K."/>
        </authorList>
    </citation>
    <scope>NUCLEOTIDE SEQUENCE [LARGE SCALE GENOMIC DNA]</scope>
    <source>
        <strain>ATCC 9150 / SARB42</strain>
    </source>
</reference>
<name>YQHA_SALPA</name>
<feature type="chain" id="PRO_1000009489" description="UPF0114 protein YqhA">
    <location>
        <begin position="1"/>
        <end position="164"/>
    </location>
</feature>
<feature type="transmembrane region" description="Helical" evidence="1">
    <location>
        <begin position="15"/>
        <end position="35"/>
    </location>
</feature>
<feature type="transmembrane region" description="Helical" evidence="1">
    <location>
        <begin position="53"/>
        <end position="73"/>
    </location>
</feature>
<feature type="transmembrane region" description="Helical" evidence="1">
    <location>
        <begin position="136"/>
        <end position="156"/>
    </location>
</feature>